<comment type="function">
    <text evidence="1">Component of the eukaryotic translation initiation factor 3 (eIF-3) complex, which is involved in protein synthesis of a specialized repertoire of mRNAs and, together with other initiation factors, stimulates binding of mRNA and methionyl-tRNAi to the 40S ribosome. The eIF-3 complex specifically targets and initiates translation of a subset of mRNAs involved in cell proliferation.</text>
</comment>
<comment type="subunit">
    <text evidence="1">Component of the eukaryotic translation initiation factor 3 (eIF-3) complex.</text>
</comment>
<comment type="subcellular location">
    <subcellularLocation>
        <location evidence="1">Cytoplasm</location>
    </subcellularLocation>
</comment>
<comment type="similarity">
    <text evidence="1">Belongs to the eIF-3 subunit K family.</text>
</comment>
<comment type="sequence caution" evidence="3">
    <conflict type="erroneous initiation">
        <sequence resource="EMBL-CDS" id="EAL92654"/>
    </conflict>
</comment>
<organism>
    <name type="scientific">Aspergillus fumigatus (strain ATCC MYA-4609 / CBS 101355 / FGSC A1100 / Af293)</name>
    <name type="common">Neosartorya fumigata</name>
    <dbReference type="NCBI Taxonomy" id="330879"/>
    <lineage>
        <taxon>Eukaryota</taxon>
        <taxon>Fungi</taxon>
        <taxon>Dikarya</taxon>
        <taxon>Ascomycota</taxon>
        <taxon>Pezizomycotina</taxon>
        <taxon>Eurotiomycetes</taxon>
        <taxon>Eurotiomycetidae</taxon>
        <taxon>Eurotiales</taxon>
        <taxon>Aspergillaceae</taxon>
        <taxon>Aspergillus</taxon>
        <taxon>Aspergillus subgen. Fumigati</taxon>
    </lineage>
</organism>
<protein>
    <recommendedName>
        <fullName evidence="1">Eukaryotic translation initiation factor 3 subunit K</fullName>
        <shortName evidence="1">eIF3k</shortName>
    </recommendedName>
    <alternativeName>
        <fullName evidence="1">eIF-3 p25</fullName>
    </alternativeName>
</protein>
<dbReference type="EMBL" id="AAHF01000002">
    <property type="protein sequence ID" value="EAL92654.1"/>
    <property type="status" value="ALT_INIT"/>
    <property type="molecule type" value="Genomic_DNA"/>
</dbReference>
<dbReference type="RefSeq" id="XP_754692.1">
    <property type="nucleotide sequence ID" value="XM_749599.1"/>
</dbReference>
<dbReference type="SMR" id="Q4WXE9"/>
<dbReference type="STRING" id="330879.Q4WXE9"/>
<dbReference type="GeneID" id="3511843"/>
<dbReference type="KEGG" id="afm:AFUA_3G09280"/>
<dbReference type="eggNOG" id="KOG3252">
    <property type="taxonomic scope" value="Eukaryota"/>
</dbReference>
<dbReference type="HOGENOM" id="CLU_076723_0_1_1"/>
<dbReference type="InParanoid" id="Q4WXE9"/>
<dbReference type="OrthoDB" id="337745at2759"/>
<dbReference type="Proteomes" id="UP000002530">
    <property type="component" value="Chromosome 3"/>
</dbReference>
<dbReference type="GO" id="GO:0016282">
    <property type="term" value="C:eukaryotic 43S preinitiation complex"/>
    <property type="evidence" value="ECO:0007669"/>
    <property type="project" value="UniProtKB-UniRule"/>
</dbReference>
<dbReference type="GO" id="GO:0033290">
    <property type="term" value="C:eukaryotic 48S preinitiation complex"/>
    <property type="evidence" value="ECO:0007669"/>
    <property type="project" value="UniProtKB-UniRule"/>
</dbReference>
<dbReference type="GO" id="GO:0005852">
    <property type="term" value="C:eukaryotic translation initiation factor 3 complex"/>
    <property type="evidence" value="ECO:0000318"/>
    <property type="project" value="GO_Central"/>
</dbReference>
<dbReference type="GO" id="GO:0043022">
    <property type="term" value="F:ribosome binding"/>
    <property type="evidence" value="ECO:0007669"/>
    <property type="project" value="InterPro"/>
</dbReference>
<dbReference type="GO" id="GO:0003723">
    <property type="term" value="F:RNA binding"/>
    <property type="evidence" value="ECO:0007669"/>
    <property type="project" value="UniProtKB-UniRule"/>
</dbReference>
<dbReference type="GO" id="GO:0003743">
    <property type="term" value="F:translation initiation factor activity"/>
    <property type="evidence" value="ECO:0007669"/>
    <property type="project" value="UniProtKB-UniRule"/>
</dbReference>
<dbReference type="GO" id="GO:0001732">
    <property type="term" value="P:formation of cytoplasmic translation initiation complex"/>
    <property type="evidence" value="ECO:0007669"/>
    <property type="project" value="UniProtKB-UniRule"/>
</dbReference>
<dbReference type="GO" id="GO:0006446">
    <property type="term" value="P:regulation of translational initiation"/>
    <property type="evidence" value="ECO:0007669"/>
    <property type="project" value="InterPro"/>
</dbReference>
<dbReference type="FunFam" id="1.10.10.10:FF:000389">
    <property type="entry name" value="Eukaryotic translation initiation factor 3 subunit K"/>
    <property type="match status" value="1"/>
</dbReference>
<dbReference type="FunFam" id="1.25.40.250:FF:000003">
    <property type="entry name" value="Eukaryotic translation initiation factor 3 subunit K"/>
    <property type="match status" value="1"/>
</dbReference>
<dbReference type="Gene3D" id="1.25.40.250">
    <property type="entry name" value="ARM repeat, domain 1"/>
    <property type="match status" value="1"/>
</dbReference>
<dbReference type="Gene3D" id="1.10.10.10">
    <property type="entry name" value="Winged helix-like DNA-binding domain superfamily/Winged helix DNA-binding domain"/>
    <property type="match status" value="1"/>
</dbReference>
<dbReference type="HAMAP" id="MF_03010">
    <property type="entry name" value="eIF3k"/>
    <property type="match status" value="1"/>
</dbReference>
<dbReference type="InterPro" id="IPR016024">
    <property type="entry name" value="ARM-type_fold"/>
</dbReference>
<dbReference type="InterPro" id="IPR033464">
    <property type="entry name" value="CSN8_PSD8_EIF3K"/>
</dbReference>
<dbReference type="InterPro" id="IPR009374">
    <property type="entry name" value="eIF3k"/>
</dbReference>
<dbReference type="InterPro" id="IPR000717">
    <property type="entry name" value="PCI_dom"/>
</dbReference>
<dbReference type="InterPro" id="IPR016020">
    <property type="entry name" value="Transl_init_fac_sub12_N_euk"/>
</dbReference>
<dbReference type="InterPro" id="IPR036388">
    <property type="entry name" value="WH-like_DNA-bd_sf"/>
</dbReference>
<dbReference type="InterPro" id="IPR036390">
    <property type="entry name" value="WH_DNA-bd_sf"/>
</dbReference>
<dbReference type="PANTHER" id="PTHR13022">
    <property type="entry name" value="EUKARYOTIC TRANSLATION INITIATION FACTOR 3 SUBUNIT 11"/>
    <property type="match status" value="1"/>
</dbReference>
<dbReference type="PANTHER" id="PTHR13022:SF0">
    <property type="entry name" value="EUKARYOTIC TRANSLATION INITIATION FACTOR 3 SUBUNIT K"/>
    <property type="match status" value="1"/>
</dbReference>
<dbReference type="Pfam" id="PF10075">
    <property type="entry name" value="CSN8_PSD8_EIF3K"/>
    <property type="match status" value="1"/>
</dbReference>
<dbReference type="SUPFAM" id="SSF48371">
    <property type="entry name" value="ARM repeat"/>
    <property type="match status" value="1"/>
</dbReference>
<dbReference type="SUPFAM" id="SSF46785">
    <property type="entry name" value="Winged helix' DNA-binding domain"/>
    <property type="match status" value="1"/>
</dbReference>
<dbReference type="PROSITE" id="PS50250">
    <property type="entry name" value="PCI"/>
    <property type="match status" value="1"/>
</dbReference>
<gene>
    <name type="ORF">AFUA_3G09280</name>
</gene>
<accession>Q4WXE9</accession>
<sequence>MGVAFDKCDTRPAHIDAILNGLDRYNPETTTVFQDYVVQQCEERTFDCYANLALLKLYQFNPHLLQPETVTNILAKALTVFPSPAFSLCLALLPAHTQPFPTADTDASQTSDFVESIQKLARLSTLLESAQYAQFWSTLNSDDLYADLVADVAGFEELVRIRIAIEVGKAFREINAEVLEQWLDLRSREALEKFVTEVCSWEVDKTGPNGTVVKVPTNKENEARSEVKSERVGVEMFGRVIRRGFEQAA</sequence>
<name>EIF3K_ASPFU</name>
<evidence type="ECO:0000255" key="1">
    <source>
        <dbReference type="HAMAP-Rule" id="MF_03010"/>
    </source>
</evidence>
<evidence type="ECO:0000255" key="2">
    <source>
        <dbReference type="PROSITE-ProRule" id="PRU01185"/>
    </source>
</evidence>
<evidence type="ECO:0000305" key="3"/>
<feature type="chain" id="PRO_0000365053" description="Eukaryotic translation initiation factor 3 subunit K">
    <location>
        <begin position="1"/>
        <end position="249"/>
    </location>
</feature>
<feature type="domain" description="PCI" evidence="2">
    <location>
        <begin position="46"/>
        <end position="222"/>
    </location>
</feature>
<keyword id="KW-0963">Cytoplasm</keyword>
<keyword id="KW-0396">Initiation factor</keyword>
<keyword id="KW-0648">Protein biosynthesis</keyword>
<keyword id="KW-1185">Reference proteome</keyword>
<reference key="1">
    <citation type="journal article" date="2005" name="Nature">
        <title>Genomic sequence of the pathogenic and allergenic filamentous fungus Aspergillus fumigatus.</title>
        <authorList>
            <person name="Nierman W.C."/>
            <person name="Pain A."/>
            <person name="Anderson M.J."/>
            <person name="Wortman J.R."/>
            <person name="Kim H.S."/>
            <person name="Arroyo J."/>
            <person name="Berriman M."/>
            <person name="Abe K."/>
            <person name="Archer D.B."/>
            <person name="Bermejo C."/>
            <person name="Bennett J.W."/>
            <person name="Bowyer P."/>
            <person name="Chen D."/>
            <person name="Collins M."/>
            <person name="Coulsen R."/>
            <person name="Davies R."/>
            <person name="Dyer P.S."/>
            <person name="Farman M.L."/>
            <person name="Fedorova N."/>
            <person name="Fedorova N.D."/>
            <person name="Feldblyum T.V."/>
            <person name="Fischer R."/>
            <person name="Fosker N."/>
            <person name="Fraser A."/>
            <person name="Garcia J.L."/>
            <person name="Garcia M.J."/>
            <person name="Goble A."/>
            <person name="Goldman G.H."/>
            <person name="Gomi K."/>
            <person name="Griffith-Jones S."/>
            <person name="Gwilliam R."/>
            <person name="Haas B.J."/>
            <person name="Haas H."/>
            <person name="Harris D.E."/>
            <person name="Horiuchi H."/>
            <person name="Huang J."/>
            <person name="Humphray S."/>
            <person name="Jimenez J."/>
            <person name="Keller N."/>
            <person name="Khouri H."/>
            <person name="Kitamoto K."/>
            <person name="Kobayashi T."/>
            <person name="Konzack S."/>
            <person name="Kulkarni R."/>
            <person name="Kumagai T."/>
            <person name="Lafton A."/>
            <person name="Latge J.-P."/>
            <person name="Li W."/>
            <person name="Lord A."/>
            <person name="Lu C."/>
            <person name="Majoros W.H."/>
            <person name="May G.S."/>
            <person name="Miller B.L."/>
            <person name="Mohamoud Y."/>
            <person name="Molina M."/>
            <person name="Monod M."/>
            <person name="Mouyna I."/>
            <person name="Mulligan S."/>
            <person name="Murphy L.D."/>
            <person name="O'Neil S."/>
            <person name="Paulsen I."/>
            <person name="Penalva M.A."/>
            <person name="Pertea M."/>
            <person name="Price C."/>
            <person name="Pritchard B.L."/>
            <person name="Quail M.A."/>
            <person name="Rabbinowitsch E."/>
            <person name="Rawlins N."/>
            <person name="Rajandream M.A."/>
            <person name="Reichard U."/>
            <person name="Renauld H."/>
            <person name="Robson G.D."/>
            <person name="Rodriguez de Cordoba S."/>
            <person name="Rodriguez-Pena J.M."/>
            <person name="Ronning C.M."/>
            <person name="Rutter S."/>
            <person name="Salzberg S.L."/>
            <person name="Sanchez M."/>
            <person name="Sanchez-Ferrero J.C."/>
            <person name="Saunders D."/>
            <person name="Seeger K."/>
            <person name="Squares R."/>
            <person name="Squares S."/>
            <person name="Takeuchi M."/>
            <person name="Tekaia F."/>
            <person name="Turner G."/>
            <person name="Vazquez de Aldana C.R."/>
            <person name="Weidman J."/>
            <person name="White O."/>
            <person name="Woodward J.R."/>
            <person name="Yu J.-H."/>
            <person name="Fraser C.M."/>
            <person name="Galagan J.E."/>
            <person name="Asai K."/>
            <person name="Machida M."/>
            <person name="Hall N."/>
            <person name="Barrell B.G."/>
            <person name="Denning D.W."/>
        </authorList>
    </citation>
    <scope>NUCLEOTIDE SEQUENCE [LARGE SCALE GENOMIC DNA]</scope>
    <source>
        <strain>ATCC MYA-4609 / CBS 101355 / FGSC A1100 / Af293</strain>
    </source>
</reference>
<proteinExistence type="inferred from homology"/>